<gene>
    <name evidence="1" type="primary">atpB</name>
    <name type="ordered locus">RC0027</name>
</gene>
<feature type="chain" id="PRO_0000082068" description="ATP synthase subunit a">
    <location>
        <begin position="1"/>
        <end position="242"/>
    </location>
</feature>
<feature type="transmembrane region" description="Helical" evidence="1">
    <location>
        <begin position="29"/>
        <end position="49"/>
    </location>
</feature>
<feature type="transmembrane region" description="Helical" evidence="1">
    <location>
        <begin position="84"/>
        <end position="104"/>
    </location>
</feature>
<feature type="transmembrane region" description="Helical" evidence="1">
    <location>
        <begin position="114"/>
        <end position="134"/>
    </location>
</feature>
<feature type="transmembrane region" description="Helical" evidence="1">
    <location>
        <begin position="140"/>
        <end position="160"/>
    </location>
</feature>
<feature type="transmembrane region" description="Helical" evidence="1">
    <location>
        <begin position="181"/>
        <end position="201"/>
    </location>
</feature>
<feature type="transmembrane region" description="Helical" evidence="1">
    <location>
        <begin position="203"/>
        <end position="223"/>
    </location>
</feature>
<dbReference type="EMBL" id="AE006914">
    <property type="protein sequence ID" value="AAL02565.1"/>
    <property type="molecule type" value="Genomic_DNA"/>
</dbReference>
<dbReference type="PIR" id="C97703">
    <property type="entry name" value="C97703"/>
</dbReference>
<dbReference type="RefSeq" id="WP_010976715.1">
    <property type="nucleotide sequence ID" value="NC_003103.1"/>
</dbReference>
<dbReference type="SMR" id="Q92JP0"/>
<dbReference type="GeneID" id="928638"/>
<dbReference type="KEGG" id="rco:RC0027"/>
<dbReference type="PATRIC" id="fig|272944.4.peg.34"/>
<dbReference type="HOGENOM" id="CLU_041018_0_2_5"/>
<dbReference type="Proteomes" id="UP000000816">
    <property type="component" value="Chromosome"/>
</dbReference>
<dbReference type="GO" id="GO:0005886">
    <property type="term" value="C:plasma membrane"/>
    <property type="evidence" value="ECO:0007669"/>
    <property type="project" value="UniProtKB-SubCell"/>
</dbReference>
<dbReference type="GO" id="GO:0045259">
    <property type="term" value="C:proton-transporting ATP synthase complex"/>
    <property type="evidence" value="ECO:0007669"/>
    <property type="project" value="UniProtKB-KW"/>
</dbReference>
<dbReference type="GO" id="GO:0046933">
    <property type="term" value="F:proton-transporting ATP synthase activity, rotational mechanism"/>
    <property type="evidence" value="ECO:0007669"/>
    <property type="project" value="UniProtKB-UniRule"/>
</dbReference>
<dbReference type="CDD" id="cd00310">
    <property type="entry name" value="ATP-synt_Fo_a_6"/>
    <property type="match status" value="1"/>
</dbReference>
<dbReference type="FunFam" id="1.20.120.220:FF:000003">
    <property type="entry name" value="ATP synthase subunit a"/>
    <property type="match status" value="1"/>
</dbReference>
<dbReference type="Gene3D" id="1.20.120.220">
    <property type="entry name" value="ATP synthase, F0 complex, subunit A"/>
    <property type="match status" value="1"/>
</dbReference>
<dbReference type="HAMAP" id="MF_01393">
    <property type="entry name" value="ATP_synth_a_bact"/>
    <property type="match status" value="1"/>
</dbReference>
<dbReference type="InterPro" id="IPR000568">
    <property type="entry name" value="ATP_synth_F0_asu"/>
</dbReference>
<dbReference type="InterPro" id="IPR023011">
    <property type="entry name" value="ATP_synth_F0_asu_AS"/>
</dbReference>
<dbReference type="InterPro" id="IPR045083">
    <property type="entry name" value="ATP_synth_F0_asu_bact/mt"/>
</dbReference>
<dbReference type="InterPro" id="IPR035908">
    <property type="entry name" value="F0_ATP_A_sf"/>
</dbReference>
<dbReference type="NCBIfam" id="TIGR01131">
    <property type="entry name" value="ATP_synt_6_or_A"/>
    <property type="match status" value="1"/>
</dbReference>
<dbReference type="NCBIfam" id="NF004482">
    <property type="entry name" value="PRK05815.2-4"/>
    <property type="match status" value="1"/>
</dbReference>
<dbReference type="PANTHER" id="PTHR11410">
    <property type="entry name" value="ATP SYNTHASE SUBUNIT A"/>
    <property type="match status" value="1"/>
</dbReference>
<dbReference type="PANTHER" id="PTHR11410:SF0">
    <property type="entry name" value="ATP SYNTHASE SUBUNIT A"/>
    <property type="match status" value="1"/>
</dbReference>
<dbReference type="Pfam" id="PF00119">
    <property type="entry name" value="ATP-synt_A"/>
    <property type="match status" value="1"/>
</dbReference>
<dbReference type="PRINTS" id="PR00123">
    <property type="entry name" value="ATPASEA"/>
</dbReference>
<dbReference type="SUPFAM" id="SSF81336">
    <property type="entry name" value="F1F0 ATP synthase subunit A"/>
    <property type="match status" value="1"/>
</dbReference>
<dbReference type="PROSITE" id="PS00449">
    <property type="entry name" value="ATPASE_A"/>
    <property type="match status" value="1"/>
</dbReference>
<sequence length="242" mass="27410">MTHSPLAQFDIKKLIDIKMFGFDVSFTNSSIYMLLASILALTYFYLAFYNRKLVPSRLQVSAEIVYNLVADMLNQNIGVKGRKFIPLVFSLFIFILFCNLLGMTPYSFTTTSHIIVTFTLAILVFLMVTIVGFVKHGLRFLTLFLPHGTPLWLAPLMIVIELFTYLARPVSLSLRLAANMMAGHVLLKVIAGFTVSLMIYLKFLPIPIMVILIGFEIFVAILQAYIFTILSCMYLNDAINLH</sequence>
<keyword id="KW-0066">ATP synthesis</keyword>
<keyword id="KW-0997">Cell inner membrane</keyword>
<keyword id="KW-1003">Cell membrane</keyword>
<keyword id="KW-0138">CF(0)</keyword>
<keyword id="KW-0375">Hydrogen ion transport</keyword>
<keyword id="KW-0406">Ion transport</keyword>
<keyword id="KW-0472">Membrane</keyword>
<keyword id="KW-0812">Transmembrane</keyword>
<keyword id="KW-1133">Transmembrane helix</keyword>
<keyword id="KW-0813">Transport</keyword>
<organism>
    <name type="scientific">Rickettsia conorii (strain ATCC VR-613 / Malish 7)</name>
    <dbReference type="NCBI Taxonomy" id="272944"/>
    <lineage>
        <taxon>Bacteria</taxon>
        <taxon>Pseudomonadati</taxon>
        <taxon>Pseudomonadota</taxon>
        <taxon>Alphaproteobacteria</taxon>
        <taxon>Rickettsiales</taxon>
        <taxon>Rickettsiaceae</taxon>
        <taxon>Rickettsieae</taxon>
        <taxon>Rickettsia</taxon>
        <taxon>spotted fever group</taxon>
    </lineage>
</organism>
<protein>
    <recommendedName>
        <fullName evidence="1">ATP synthase subunit a</fullName>
    </recommendedName>
    <alternativeName>
        <fullName evidence="1">ATP synthase F0 sector subunit a</fullName>
    </alternativeName>
    <alternativeName>
        <fullName evidence="1">F-ATPase subunit 6</fullName>
    </alternativeName>
</protein>
<accession>Q92JP0</accession>
<name>ATP6_RICCN</name>
<proteinExistence type="inferred from homology"/>
<comment type="function">
    <text evidence="1">Key component of the proton channel; it plays a direct role in the translocation of protons across the membrane.</text>
</comment>
<comment type="subunit">
    <text evidence="1">F-type ATPases have 2 components, CF(1) - the catalytic core - and CF(0) - the membrane proton channel. CF(1) has five subunits: alpha(3), beta(3), gamma(1), delta(1), epsilon(1). CF(0) has three main subunits: a(1), b(2) and c(9-12). The alpha and beta chains form an alternating ring which encloses part of the gamma chain. CF(1) is attached to CF(0) by a central stalk formed by the gamma and epsilon chains, while a peripheral stalk is formed by the delta and b chains.</text>
</comment>
<comment type="subcellular location">
    <subcellularLocation>
        <location evidence="1">Cell inner membrane</location>
        <topology evidence="1">Multi-pass membrane protein</topology>
    </subcellularLocation>
</comment>
<comment type="similarity">
    <text evidence="1">Belongs to the ATPase A chain family.</text>
</comment>
<reference key="1">
    <citation type="journal article" date="2001" name="Science">
        <title>Mechanisms of evolution in Rickettsia conorii and R. prowazekii.</title>
        <authorList>
            <person name="Ogata H."/>
            <person name="Audic S."/>
            <person name="Renesto-Audiffren P."/>
            <person name="Fournier P.-E."/>
            <person name="Barbe V."/>
            <person name="Samson D."/>
            <person name="Roux V."/>
            <person name="Cossart P."/>
            <person name="Weissenbach J."/>
            <person name="Claverie J.-M."/>
            <person name="Raoult D."/>
        </authorList>
    </citation>
    <scope>NUCLEOTIDE SEQUENCE [LARGE SCALE GENOMIC DNA]</scope>
    <source>
        <strain>ATCC VR-613 / Malish 7</strain>
    </source>
</reference>
<evidence type="ECO:0000255" key="1">
    <source>
        <dbReference type="HAMAP-Rule" id="MF_01393"/>
    </source>
</evidence>